<dbReference type="EMBL" id="AY059504">
    <property type="status" value="NOT_ANNOTATED_CDS"/>
    <property type="molecule type" value="Genomic_RNA"/>
</dbReference>
<dbReference type="SMR" id="P0C5T7"/>
<dbReference type="Proteomes" id="UP000008285">
    <property type="component" value="Genome"/>
</dbReference>
<dbReference type="GO" id="GO:0042025">
    <property type="term" value="C:host cell nucleus"/>
    <property type="evidence" value="ECO:0007669"/>
    <property type="project" value="UniProtKB-SubCell"/>
</dbReference>
<dbReference type="GO" id="GO:0044423">
    <property type="term" value="C:virion component"/>
    <property type="evidence" value="ECO:0007669"/>
    <property type="project" value="UniProtKB-UniRule"/>
</dbReference>
<dbReference type="GO" id="GO:0039675">
    <property type="term" value="P:exit of virus from host cell nucleus through nuclear pore"/>
    <property type="evidence" value="ECO:0007669"/>
    <property type="project" value="UniProtKB-UniRule"/>
</dbReference>
<dbReference type="Gene3D" id="1.10.287.230">
    <property type="match status" value="1"/>
</dbReference>
<dbReference type="Gene3D" id="1.10.287.10">
    <property type="entry name" value="S15/NS1, RNA-binding"/>
    <property type="match status" value="1"/>
</dbReference>
<dbReference type="HAMAP" id="MF_04067">
    <property type="entry name" value="INFV_NEP"/>
    <property type="match status" value="1"/>
</dbReference>
<dbReference type="InterPro" id="IPR000968">
    <property type="entry name" value="Flu_NS2"/>
</dbReference>
<dbReference type="Pfam" id="PF00601">
    <property type="entry name" value="Flu_NS2"/>
    <property type="match status" value="1"/>
</dbReference>
<dbReference type="SUPFAM" id="SSF101156">
    <property type="entry name" value="Nonstructural protein ns2, Nep, M1-binding domain"/>
    <property type="match status" value="1"/>
</dbReference>
<organismHost>
    <name type="scientific">Aves</name>
    <dbReference type="NCBI Taxonomy" id="8782"/>
</organismHost>
<organismHost>
    <name type="scientific">Felis catus</name>
    <name type="common">Cat</name>
    <name type="synonym">Felis silvestris catus</name>
    <dbReference type="NCBI Taxonomy" id="9685"/>
</organismHost>
<organismHost>
    <name type="scientific">Homo sapiens</name>
    <name type="common">Human</name>
    <dbReference type="NCBI Taxonomy" id="9606"/>
</organismHost>
<organismHost>
    <name type="scientific">Panthera pardus</name>
    <name type="common">Leopard</name>
    <name type="synonym">Felis pardus</name>
    <dbReference type="NCBI Taxonomy" id="9691"/>
</organismHost>
<organismHost>
    <name type="scientific">Panthera tigris</name>
    <name type="common">Tiger</name>
    <dbReference type="NCBI Taxonomy" id="9694"/>
</organismHost>
<organismHost>
    <name type="scientific">Sus scrofa</name>
    <name type="common">Pig</name>
    <dbReference type="NCBI Taxonomy" id="9823"/>
</organismHost>
<sequence>MDSNTVSSFQDILMRMSKMQFGSSSEDLNGMITQFESLKFYRDSLGEAVMRMGDLHSLQIRNGKWREQLSQKFEEIRWLIEEVRHRLKITENSFEQITFMQALQLLLEVEQEIRTFSFQLI</sequence>
<comment type="function">
    <text evidence="1">Mediates the nuclear export of encapsidated genomic RNAs (ribonucleoproteins, RNPs). Acts as an adapter between viral RNPs complexes and the nuclear export machinery of the cell. Possesses no intrinsic RNA-binding activity, but includes a C-terminal M1-binding domain. This domain is believed to allow recognition of RNPs bound to the protein M1. Since protein M1 is not available in large quantities before late stages of infection, such an indirect recognition mechanism probably ensures that genomic RNPs are not exported from the host nucleus until sufficient quantities of viral mRNA and progeny genomic RNA have been synthesized. Furthermore, the RNPs enter the host cytoplasm only when associated with the M1 protein that is necessary to guide them to the plasma membrane. May down-regulate viral RNA synthesis when overproduced.</text>
</comment>
<comment type="subunit">
    <text evidence="1">Interacts with protein M1. May interact with host nucleoporin RAB/HRB and exportin XPO1/CRM1.</text>
</comment>
<comment type="subcellular location">
    <subcellularLocation>
        <location evidence="1">Virion</location>
    </subcellularLocation>
    <subcellularLocation>
        <location evidence="1">Host nucleus</location>
    </subcellularLocation>
</comment>
<comment type="alternative products">
    <event type="alternative splicing"/>
    <isoform>
        <id>P0C5T7-1</id>
        <name>NEP</name>
        <name>NS2</name>
        <sequence type="displayed"/>
    </isoform>
    <isoform>
        <id>Q8QPI8-1</id>
        <name>NS1</name>
        <sequence type="external"/>
    </isoform>
</comment>
<comment type="miscellaneous">
    <text>Average number present in a viral particle is estimated to be 130-200 molecules.</text>
</comment>
<comment type="similarity">
    <text evidence="1">Belongs to the influenza viruses NEP family.</text>
</comment>
<name>NEP_I00A0</name>
<protein>
    <recommendedName>
        <fullName evidence="1">Nuclear export protein</fullName>
        <shortName evidence="1">NEP</shortName>
    </recommendedName>
    <alternativeName>
        <fullName evidence="1">Non-structural protein 2</fullName>
        <shortName evidence="1">NS2</shortName>
    </alternativeName>
</protein>
<accession>P0C5T7</accession>
<proteinExistence type="inferred from homology"/>
<organism>
    <name type="scientific">Influenza A virus (strain A/Duck/Hong Kong/2986.1/2000 H5N1 genotype C)</name>
    <dbReference type="NCBI Taxonomy" id="176674"/>
    <lineage>
        <taxon>Viruses</taxon>
        <taxon>Riboviria</taxon>
        <taxon>Orthornavirae</taxon>
        <taxon>Negarnaviricota</taxon>
        <taxon>Polyploviricotina</taxon>
        <taxon>Insthoviricetes</taxon>
        <taxon>Articulavirales</taxon>
        <taxon>Orthomyxoviridae</taxon>
        <taxon>Alphainfluenzavirus</taxon>
        <taxon>Alphainfluenzavirus influenzae</taxon>
        <taxon>Influenza A virus</taxon>
    </lineage>
</organism>
<keyword id="KW-0025">Alternative splicing</keyword>
<keyword id="KW-1048">Host nucleus</keyword>
<keyword id="KW-0945">Host-virus interaction</keyword>
<keyword id="KW-0813">Transport</keyword>
<keyword id="KW-0946">Virion</keyword>
<reference key="1">
    <citation type="journal article" date="2002" name="Virology">
        <title>H5N1 influenza viruses isolated from geese in Southeastern China: evidence for genetic reassortment and interspecies transmission to ducks.</title>
        <authorList>
            <person name="Guan Y."/>
            <person name="Peiris M."/>
            <person name="Kong K.F."/>
            <person name="Dyrting K.C."/>
            <person name="Ellis T.M."/>
            <person name="Sit T."/>
            <person name="Zhang L.J."/>
            <person name="Shortridge K.F."/>
        </authorList>
    </citation>
    <scope>NUCLEOTIDE SEQUENCE [GENOMIC RNA]</scope>
</reference>
<gene>
    <name evidence="1" type="primary">NS</name>
</gene>
<feature type="chain" id="PRO_0000311727" description="Nuclear export protein">
    <location>
        <begin position="1"/>
        <end position="121"/>
    </location>
</feature>
<feature type="short sequence motif" description="Nuclear export signal" evidence="1">
    <location>
        <begin position="12"/>
        <end position="21"/>
    </location>
</feature>
<feature type="short sequence motif" description="Nuclear export signal" evidence="1">
    <location>
        <begin position="85"/>
        <end position="94"/>
    </location>
</feature>
<evidence type="ECO:0000255" key="1">
    <source>
        <dbReference type="HAMAP-Rule" id="MF_04067"/>
    </source>
</evidence>